<comment type="similarity">
    <text evidence="1">Belongs to the UPF0173 family.</text>
</comment>
<sequence>MKLSFHGQSTIYLEGNNKKVIVDPFISNNPKCDLNIETVQVDYIVLTHGHFDHFGDVVELAKKTEATVIGSAEMADYLSSYHGVENVHGMNIGGKANFDFGSVKFVQAFHSSSFTHENGIPVYLGMPMGIVFEVEGKTIYHTGDTGLFSDMSLIAKRHPVDVCFVPIGDNFTMGIDDASYAINEFIKPKISVPIHYDTFPLIEQDPQQFKDAVNVGDVQILKPGESVQF</sequence>
<dbReference type="EMBL" id="BX571856">
    <property type="protein sequence ID" value="CAG40776.1"/>
    <property type="molecule type" value="Genomic_DNA"/>
</dbReference>
<dbReference type="RefSeq" id="WP_000777184.1">
    <property type="nucleotide sequence ID" value="NC_002952.2"/>
</dbReference>
<dbReference type="SMR" id="Q6GG00"/>
<dbReference type="KEGG" id="sar:SAR1785"/>
<dbReference type="HOGENOM" id="CLU_070010_4_1_9"/>
<dbReference type="Proteomes" id="UP000000596">
    <property type="component" value="Chromosome"/>
</dbReference>
<dbReference type="GO" id="GO:0016787">
    <property type="term" value="F:hydrolase activity"/>
    <property type="evidence" value="ECO:0007669"/>
    <property type="project" value="UniProtKB-UniRule"/>
</dbReference>
<dbReference type="CDD" id="cd06262">
    <property type="entry name" value="metallo-hydrolase-like_MBL-fold"/>
    <property type="match status" value="1"/>
</dbReference>
<dbReference type="Gene3D" id="3.60.15.10">
    <property type="entry name" value="Ribonuclease Z/Hydroxyacylglutathione hydrolase-like"/>
    <property type="match status" value="1"/>
</dbReference>
<dbReference type="HAMAP" id="MF_00457">
    <property type="entry name" value="UPF0173"/>
    <property type="match status" value="1"/>
</dbReference>
<dbReference type="InterPro" id="IPR001279">
    <property type="entry name" value="Metallo-B-lactamas"/>
</dbReference>
<dbReference type="InterPro" id="IPR036866">
    <property type="entry name" value="RibonucZ/Hydroxyglut_hydro"/>
</dbReference>
<dbReference type="InterPro" id="IPR022877">
    <property type="entry name" value="UPF0173"/>
</dbReference>
<dbReference type="InterPro" id="IPR050114">
    <property type="entry name" value="UPF0173_UPF0282_UlaG_hydrolase"/>
</dbReference>
<dbReference type="NCBIfam" id="NF001911">
    <property type="entry name" value="PRK00685.1"/>
    <property type="match status" value="1"/>
</dbReference>
<dbReference type="PANTHER" id="PTHR43546:SF3">
    <property type="entry name" value="UPF0173 METAL-DEPENDENT HYDROLASE MJ1163"/>
    <property type="match status" value="1"/>
</dbReference>
<dbReference type="PANTHER" id="PTHR43546">
    <property type="entry name" value="UPF0173 METAL-DEPENDENT HYDROLASE MJ1163-RELATED"/>
    <property type="match status" value="1"/>
</dbReference>
<dbReference type="Pfam" id="PF12706">
    <property type="entry name" value="Lactamase_B_2"/>
    <property type="match status" value="1"/>
</dbReference>
<dbReference type="SMART" id="SM00849">
    <property type="entry name" value="Lactamase_B"/>
    <property type="match status" value="1"/>
</dbReference>
<dbReference type="SUPFAM" id="SSF56281">
    <property type="entry name" value="Metallo-hydrolase/oxidoreductase"/>
    <property type="match status" value="1"/>
</dbReference>
<protein>
    <recommendedName>
        <fullName evidence="1">UPF0173 metal-dependent hydrolase SAR1785</fullName>
    </recommendedName>
</protein>
<reference key="1">
    <citation type="journal article" date="2004" name="Proc. Natl. Acad. Sci. U.S.A.">
        <title>Complete genomes of two clinical Staphylococcus aureus strains: evidence for the rapid evolution of virulence and drug resistance.</title>
        <authorList>
            <person name="Holden M.T.G."/>
            <person name="Feil E.J."/>
            <person name="Lindsay J.A."/>
            <person name="Peacock S.J."/>
            <person name="Day N.P.J."/>
            <person name="Enright M.C."/>
            <person name="Foster T.J."/>
            <person name="Moore C.E."/>
            <person name="Hurst L."/>
            <person name="Atkin R."/>
            <person name="Barron A."/>
            <person name="Bason N."/>
            <person name="Bentley S.D."/>
            <person name="Chillingworth C."/>
            <person name="Chillingworth T."/>
            <person name="Churcher C."/>
            <person name="Clark L."/>
            <person name="Corton C."/>
            <person name="Cronin A."/>
            <person name="Doggett J."/>
            <person name="Dowd L."/>
            <person name="Feltwell T."/>
            <person name="Hance Z."/>
            <person name="Harris B."/>
            <person name="Hauser H."/>
            <person name="Holroyd S."/>
            <person name="Jagels K."/>
            <person name="James K.D."/>
            <person name="Lennard N."/>
            <person name="Line A."/>
            <person name="Mayes R."/>
            <person name="Moule S."/>
            <person name="Mungall K."/>
            <person name="Ormond D."/>
            <person name="Quail M.A."/>
            <person name="Rabbinowitsch E."/>
            <person name="Rutherford K.M."/>
            <person name="Sanders M."/>
            <person name="Sharp S."/>
            <person name="Simmonds M."/>
            <person name="Stevens K."/>
            <person name="Whitehead S."/>
            <person name="Barrell B.G."/>
            <person name="Spratt B.G."/>
            <person name="Parkhill J."/>
        </authorList>
    </citation>
    <scope>NUCLEOTIDE SEQUENCE [LARGE SCALE GENOMIC DNA]</scope>
    <source>
        <strain>MRSA252</strain>
    </source>
</reference>
<accession>Q6GG00</accession>
<keyword id="KW-0378">Hydrolase</keyword>
<gene>
    <name type="ordered locus">SAR1785</name>
</gene>
<evidence type="ECO:0000255" key="1">
    <source>
        <dbReference type="HAMAP-Rule" id="MF_00457"/>
    </source>
</evidence>
<organism>
    <name type="scientific">Staphylococcus aureus (strain MRSA252)</name>
    <dbReference type="NCBI Taxonomy" id="282458"/>
    <lineage>
        <taxon>Bacteria</taxon>
        <taxon>Bacillati</taxon>
        <taxon>Bacillota</taxon>
        <taxon>Bacilli</taxon>
        <taxon>Bacillales</taxon>
        <taxon>Staphylococcaceae</taxon>
        <taxon>Staphylococcus</taxon>
    </lineage>
</organism>
<name>Y1785_STAAR</name>
<proteinExistence type="inferred from homology"/>
<feature type="chain" id="PRO_0000156380" description="UPF0173 metal-dependent hydrolase SAR1785">
    <location>
        <begin position="1"/>
        <end position="229"/>
    </location>
</feature>